<dbReference type="EMBL" id="CP000686">
    <property type="protein sequence ID" value="ABQ89443.1"/>
    <property type="molecule type" value="Genomic_DNA"/>
</dbReference>
<dbReference type="RefSeq" id="WP_011955796.1">
    <property type="nucleotide sequence ID" value="NC_009523.1"/>
</dbReference>
<dbReference type="SMR" id="A5US40"/>
<dbReference type="STRING" id="357808.RoseRS_1034"/>
<dbReference type="KEGG" id="rrs:RoseRS_1034"/>
<dbReference type="eggNOG" id="COG0292">
    <property type="taxonomic scope" value="Bacteria"/>
</dbReference>
<dbReference type="HOGENOM" id="CLU_123265_0_1_0"/>
<dbReference type="OrthoDB" id="9808966at2"/>
<dbReference type="Proteomes" id="UP000006554">
    <property type="component" value="Chromosome"/>
</dbReference>
<dbReference type="GO" id="GO:1990904">
    <property type="term" value="C:ribonucleoprotein complex"/>
    <property type="evidence" value="ECO:0007669"/>
    <property type="project" value="UniProtKB-KW"/>
</dbReference>
<dbReference type="GO" id="GO:0005840">
    <property type="term" value="C:ribosome"/>
    <property type="evidence" value="ECO:0007669"/>
    <property type="project" value="UniProtKB-KW"/>
</dbReference>
<dbReference type="GO" id="GO:0019843">
    <property type="term" value="F:rRNA binding"/>
    <property type="evidence" value="ECO:0007669"/>
    <property type="project" value="UniProtKB-UniRule"/>
</dbReference>
<dbReference type="GO" id="GO:0003735">
    <property type="term" value="F:structural constituent of ribosome"/>
    <property type="evidence" value="ECO:0007669"/>
    <property type="project" value="InterPro"/>
</dbReference>
<dbReference type="GO" id="GO:0000027">
    <property type="term" value="P:ribosomal large subunit assembly"/>
    <property type="evidence" value="ECO:0007669"/>
    <property type="project" value="UniProtKB-UniRule"/>
</dbReference>
<dbReference type="GO" id="GO:0006412">
    <property type="term" value="P:translation"/>
    <property type="evidence" value="ECO:0007669"/>
    <property type="project" value="InterPro"/>
</dbReference>
<dbReference type="CDD" id="cd07026">
    <property type="entry name" value="Ribosomal_L20"/>
    <property type="match status" value="1"/>
</dbReference>
<dbReference type="FunFam" id="1.10.1900.20:FF:000001">
    <property type="entry name" value="50S ribosomal protein L20"/>
    <property type="match status" value="1"/>
</dbReference>
<dbReference type="Gene3D" id="6.10.160.10">
    <property type="match status" value="1"/>
</dbReference>
<dbReference type="Gene3D" id="1.10.1900.20">
    <property type="entry name" value="Ribosomal protein L20"/>
    <property type="match status" value="1"/>
</dbReference>
<dbReference type="HAMAP" id="MF_00382">
    <property type="entry name" value="Ribosomal_bL20"/>
    <property type="match status" value="1"/>
</dbReference>
<dbReference type="InterPro" id="IPR005813">
    <property type="entry name" value="Ribosomal_bL20"/>
</dbReference>
<dbReference type="InterPro" id="IPR049946">
    <property type="entry name" value="RIBOSOMAL_L20_CS"/>
</dbReference>
<dbReference type="InterPro" id="IPR035566">
    <property type="entry name" value="Ribosomal_protein_bL20_C"/>
</dbReference>
<dbReference type="NCBIfam" id="TIGR01032">
    <property type="entry name" value="rplT_bact"/>
    <property type="match status" value="1"/>
</dbReference>
<dbReference type="PANTHER" id="PTHR10986">
    <property type="entry name" value="39S RIBOSOMAL PROTEIN L20"/>
    <property type="match status" value="1"/>
</dbReference>
<dbReference type="Pfam" id="PF00453">
    <property type="entry name" value="Ribosomal_L20"/>
    <property type="match status" value="1"/>
</dbReference>
<dbReference type="PRINTS" id="PR00062">
    <property type="entry name" value="RIBOSOMALL20"/>
</dbReference>
<dbReference type="SUPFAM" id="SSF74731">
    <property type="entry name" value="Ribosomal protein L20"/>
    <property type="match status" value="1"/>
</dbReference>
<dbReference type="PROSITE" id="PS00937">
    <property type="entry name" value="RIBOSOMAL_L20"/>
    <property type="match status" value="1"/>
</dbReference>
<proteinExistence type="inferred from homology"/>
<gene>
    <name evidence="1" type="primary">rplT</name>
    <name type="ordered locus">RoseRS_1034</name>
</gene>
<keyword id="KW-0687">Ribonucleoprotein</keyword>
<keyword id="KW-0689">Ribosomal protein</keyword>
<keyword id="KW-0694">RNA-binding</keyword>
<keyword id="KW-0699">rRNA-binding</keyword>
<organism>
    <name type="scientific">Roseiflexus sp. (strain RS-1)</name>
    <dbReference type="NCBI Taxonomy" id="357808"/>
    <lineage>
        <taxon>Bacteria</taxon>
        <taxon>Bacillati</taxon>
        <taxon>Chloroflexota</taxon>
        <taxon>Chloroflexia</taxon>
        <taxon>Chloroflexales</taxon>
        <taxon>Roseiflexineae</taxon>
        <taxon>Roseiflexaceae</taxon>
        <taxon>Roseiflexus</taxon>
    </lineage>
</organism>
<feature type="chain" id="PRO_1000049059" description="Large ribosomal subunit protein bL20">
    <location>
        <begin position="1"/>
        <end position="117"/>
    </location>
</feature>
<protein>
    <recommendedName>
        <fullName evidence="1">Large ribosomal subunit protein bL20</fullName>
    </recommendedName>
    <alternativeName>
        <fullName evidence="2">50S ribosomal protein L20</fullName>
    </alternativeName>
</protein>
<evidence type="ECO:0000255" key="1">
    <source>
        <dbReference type="HAMAP-Rule" id="MF_00382"/>
    </source>
</evidence>
<evidence type="ECO:0000305" key="2"/>
<sequence>MARVKRGVMVRKRHKKLLEQAKGYRGSRSRRVKVARETVMKALWYAYRDRRNRKRDFRRLWIVRINAAARMHGMSYSRFMNGLKRAGIDLDRKILADMAVRDPAAFSRVVEQARQAV</sequence>
<comment type="function">
    <text evidence="1">Binds directly to 23S ribosomal RNA and is necessary for the in vitro assembly process of the 50S ribosomal subunit. It is not involved in the protein synthesizing functions of that subunit.</text>
</comment>
<comment type="similarity">
    <text evidence="1">Belongs to the bacterial ribosomal protein bL20 family.</text>
</comment>
<name>RL20_ROSS1</name>
<accession>A5US40</accession>
<reference key="1">
    <citation type="submission" date="2007-04" db="EMBL/GenBank/DDBJ databases">
        <title>Complete sequence of Roseiflexus sp. RS-1.</title>
        <authorList>
            <consortium name="US DOE Joint Genome Institute"/>
            <person name="Copeland A."/>
            <person name="Lucas S."/>
            <person name="Lapidus A."/>
            <person name="Barry K."/>
            <person name="Detter J.C."/>
            <person name="Glavina del Rio T."/>
            <person name="Hammon N."/>
            <person name="Israni S."/>
            <person name="Dalin E."/>
            <person name="Tice H."/>
            <person name="Pitluck S."/>
            <person name="Chertkov O."/>
            <person name="Brettin T."/>
            <person name="Bruce D."/>
            <person name="Han C."/>
            <person name="Schmutz J."/>
            <person name="Larimer F."/>
            <person name="Land M."/>
            <person name="Hauser L."/>
            <person name="Kyrpides N."/>
            <person name="Mikhailova N."/>
            <person name="Bryant D.A."/>
            <person name="Richardson P."/>
        </authorList>
    </citation>
    <scope>NUCLEOTIDE SEQUENCE [LARGE SCALE GENOMIC DNA]</scope>
    <source>
        <strain>RS-1</strain>
    </source>
</reference>